<comment type="function">
    <text evidence="1">Nucleotide-binding protein.</text>
</comment>
<comment type="similarity">
    <text evidence="1">Belongs to the YajQ family.</text>
</comment>
<keyword id="KW-0547">Nucleotide-binding</keyword>
<name>Y1202_BACC3</name>
<reference key="1">
    <citation type="submission" date="2009-02" db="EMBL/GenBank/DDBJ databases">
        <title>Genome sequence of Bacillus cereus 03BB102.</title>
        <authorList>
            <person name="Dodson R.J."/>
            <person name="Jackson P."/>
            <person name="Munk A.C."/>
            <person name="Brettin T."/>
            <person name="Bruce D."/>
            <person name="Detter C."/>
            <person name="Tapia R."/>
            <person name="Han C."/>
            <person name="Sutton G."/>
            <person name="Sims D."/>
        </authorList>
    </citation>
    <scope>NUCLEOTIDE SEQUENCE [LARGE SCALE GENOMIC DNA]</scope>
    <source>
        <strain>03BB102</strain>
    </source>
</reference>
<gene>
    <name type="ordered locus">BCA_1202</name>
</gene>
<sequence length="163" mass="18387">MAKDSSFDIVSKVELPEVTNAINTALKEIQNRYDFKGSKSDIKLEKEVLVLTSDDEFKLEQVKDVLISKLVKRNVPIKNLDYGKVEAAAGNTVRQRATLQQGIDKDNAKKINNIIKEMKLKVKTQVQDDQVRVTAKSRDDLQAVIAAVRSADLPIDVQFINYR</sequence>
<organism>
    <name type="scientific">Bacillus cereus (strain 03BB102)</name>
    <dbReference type="NCBI Taxonomy" id="572264"/>
    <lineage>
        <taxon>Bacteria</taxon>
        <taxon>Bacillati</taxon>
        <taxon>Bacillota</taxon>
        <taxon>Bacilli</taxon>
        <taxon>Bacillales</taxon>
        <taxon>Bacillaceae</taxon>
        <taxon>Bacillus</taxon>
        <taxon>Bacillus cereus group</taxon>
    </lineage>
</organism>
<feature type="chain" id="PRO_1000147281" description="Nucleotide-binding protein BCA_1202">
    <location>
        <begin position="1"/>
        <end position="163"/>
    </location>
</feature>
<proteinExistence type="inferred from homology"/>
<evidence type="ECO:0000255" key="1">
    <source>
        <dbReference type="HAMAP-Rule" id="MF_00632"/>
    </source>
</evidence>
<protein>
    <recommendedName>
        <fullName evidence="1">Nucleotide-binding protein BCA_1202</fullName>
    </recommendedName>
</protein>
<dbReference type="EMBL" id="CP001407">
    <property type="protein sequence ID" value="ACO26382.1"/>
    <property type="molecule type" value="Genomic_DNA"/>
</dbReference>
<dbReference type="RefSeq" id="WP_001040153.1">
    <property type="nucleotide sequence ID" value="NZ_CP009318.1"/>
</dbReference>
<dbReference type="SMR" id="C1EL70"/>
<dbReference type="KEGG" id="bcx:BCA_1202"/>
<dbReference type="PATRIC" id="fig|572264.18.peg.1153"/>
<dbReference type="Proteomes" id="UP000002210">
    <property type="component" value="Chromosome"/>
</dbReference>
<dbReference type="GO" id="GO:0005829">
    <property type="term" value="C:cytosol"/>
    <property type="evidence" value="ECO:0007669"/>
    <property type="project" value="TreeGrafter"/>
</dbReference>
<dbReference type="GO" id="GO:0000166">
    <property type="term" value="F:nucleotide binding"/>
    <property type="evidence" value="ECO:0007669"/>
    <property type="project" value="TreeGrafter"/>
</dbReference>
<dbReference type="CDD" id="cd11740">
    <property type="entry name" value="YajQ_like"/>
    <property type="match status" value="1"/>
</dbReference>
<dbReference type="FunFam" id="3.30.70.990:FF:000002">
    <property type="entry name" value="UPF0234 protein LEP1GSC067_4943"/>
    <property type="match status" value="1"/>
</dbReference>
<dbReference type="FunFam" id="3.30.70.860:FF:000003">
    <property type="entry name" value="UPF0234 protein YBT020_06460"/>
    <property type="match status" value="1"/>
</dbReference>
<dbReference type="Gene3D" id="3.30.70.860">
    <property type="match status" value="1"/>
</dbReference>
<dbReference type="Gene3D" id="3.30.70.990">
    <property type="entry name" value="YajQ-like, domain 2"/>
    <property type="match status" value="1"/>
</dbReference>
<dbReference type="HAMAP" id="MF_00632">
    <property type="entry name" value="YajQ"/>
    <property type="match status" value="1"/>
</dbReference>
<dbReference type="InterPro" id="IPR007551">
    <property type="entry name" value="DUF520"/>
</dbReference>
<dbReference type="InterPro" id="IPR035571">
    <property type="entry name" value="UPF0234-like_C"/>
</dbReference>
<dbReference type="InterPro" id="IPR035570">
    <property type="entry name" value="UPF0234_N"/>
</dbReference>
<dbReference type="InterPro" id="IPR036183">
    <property type="entry name" value="YajQ-like_sf"/>
</dbReference>
<dbReference type="NCBIfam" id="NF003819">
    <property type="entry name" value="PRK05412.1"/>
    <property type="match status" value="1"/>
</dbReference>
<dbReference type="PANTHER" id="PTHR30476">
    <property type="entry name" value="UPF0234 PROTEIN YAJQ"/>
    <property type="match status" value="1"/>
</dbReference>
<dbReference type="PANTHER" id="PTHR30476:SF0">
    <property type="entry name" value="UPF0234 PROTEIN YAJQ"/>
    <property type="match status" value="1"/>
</dbReference>
<dbReference type="Pfam" id="PF04461">
    <property type="entry name" value="DUF520"/>
    <property type="match status" value="1"/>
</dbReference>
<dbReference type="SUPFAM" id="SSF89963">
    <property type="entry name" value="YajQ-like"/>
    <property type="match status" value="2"/>
</dbReference>
<accession>C1EL70</accession>